<name>RECF_SHEFN</name>
<keyword id="KW-0067">ATP-binding</keyword>
<keyword id="KW-0963">Cytoplasm</keyword>
<keyword id="KW-0227">DNA damage</keyword>
<keyword id="KW-0234">DNA repair</keyword>
<keyword id="KW-0235">DNA replication</keyword>
<keyword id="KW-0238">DNA-binding</keyword>
<keyword id="KW-0547">Nucleotide-binding</keyword>
<keyword id="KW-1185">Reference proteome</keyword>
<keyword id="KW-0742">SOS response</keyword>
<accession>Q08A49</accession>
<proteinExistence type="inferred from homology"/>
<sequence length="360" mass="40682">MSLSRINIGSFRNITSASLQPCDGLNLIYGQNGSGKTSILEAIYFLGMGRSFRSHLSQRVINNDDDKLTLFAHLIDADRDCKIGLRRHRSGEIEVKIDGEKVKRLSTLAETLPIQVITPESFSLLFEGPKARRQFIDWGAFHSDPHFYQAWVNTRKVLKQRNQLLRNQSSYNQIQFWDKELVRYAEQVTDIRNQYVDSLNVLLKGIIGVFLPRIDIKVSFTRGWDSKTDFAQLLENQYSRDLAAGNTGSGPHKADLRLRVGNLPAQDALSRGQLKLLVCALRIAQGKLLKQQLDKNSIYLVDDLPSELDAQHRQLLLQLLTETGAQIFVTAIDPQAIVDSLSSPPNRMFHVEQGLVTVIE</sequence>
<comment type="function">
    <text evidence="1">The RecF protein is involved in DNA metabolism; it is required for DNA replication and normal SOS inducibility. RecF binds preferentially to single-stranded, linear DNA. It also seems to bind ATP.</text>
</comment>
<comment type="subcellular location">
    <subcellularLocation>
        <location evidence="1">Cytoplasm</location>
    </subcellularLocation>
</comment>
<comment type="similarity">
    <text evidence="1">Belongs to the RecF family.</text>
</comment>
<evidence type="ECO:0000255" key="1">
    <source>
        <dbReference type="HAMAP-Rule" id="MF_00365"/>
    </source>
</evidence>
<organism>
    <name type="scientific">Shewanella frigidimarina (strain NCIMB 400)</name>
    <dbReference type="NCBI Taxonomy" id="318167"/>
    <lineage>
        <taxon>Bacteria</taxon>
        <taxon>Pseudomonadati</taxon>
        <taxon>Pseudomonadota</taxon>
        <taxon>Gammaproteobacteria</taxon>
        <taxon>Alteromonadales</taxon>
        <taxon>Shewanellaceae</taxon>
        <taxon>Shewanella</taxon>
    </lineage>
</organism>
<feature type="chain" id="PRO_1000048573" description="DNA replication and repair protein RecF">
    <location>
        <begin position="1"/>
        <end position="360"/>
    </location>
</feature>
<feature type="binding site" evidence="1">
    <location>
        <begin position="30"/>
        <end position="37"/>
    </location>
    <ligand>
        <name>ATP</name>
        <dbReference type="ChEBI" id="CHEBI:30616"/>
    </ligand>
</feature>
<protein>
    <recommendedName>
        <fullName evidence="1">DNA replication and repair protein RecF</fullName>
    </recommendedName>
</protein>
<reference key="1">
    <citation type="submission" date="2006-08" db="EMBL/GenBank/DDBJ databases">
        <title>Complete sequence of Shewanella frigidimarina NCIMB 400.</title>
        <authorList>
            <consortium name="US DOE Joint Genome Institute"/>
            <person name="Copeland A."/>
            <person name="Lucas S."/>
            <person name="Lapidus A."/>
            <person name="Barry K."/>
            <person name="Detter J.C."/>
            <person name="Glavina del Rio T."/>
            <person name="Hammon N."/>
            <person name="Israni S."/>
            <person name="Dalin E."/>
            <person name="Tice H."/>
            <person name="Pitluck S."/>
            <person name="Fredrickson J.K."/>
            <person name="Kolker E."/>
            <person name="McCuel L.A."/>
            <person name="DiChristina T."/>
            <person name="Nealson K.H."/>
            <person name="Newman D."/>
            <person name="Tiedje J.M."/>
            <person name="Zhou J."/>
            <person name="Romine M.F."/>
            <person name="Culley D.E."/>
            <person name="Serres M."/>
            <person name="Chertkov O."/>
            <person name="Brettin T."/>
            <person name="Bruce D."/>
            <person name="Han C."/>
            <person name="Tapia R."/>
            <person name="Gilna P."/>
            <person name="Schmutz J."/>
            <person name="Larimer F."/>
            <person name="Land M."/>
            <person name="Hauser L."/>
            <person name="Kyrpides N."/>
            <person name="Mikhailova N."/>
            <person name="Richardson P."/>
        </authorList>
    </citation>
    <scope>NUCLEOTIDE SEQUENCE [LARGE SCALE GENOMIC DNA]</scope>
    <source>
        <strain>NCIMB 400</strain>
    </source>
</reference>
<gene>
    <name evidence="1" type="primary">recF</name>
    <name type="ordered locus">Sfri_0003</name>
</gene>
<dbReference type="EMBL" id="CP000447">
    <property type="protein sequence ID" value="ABI69866.1"/>
    <property type="molecule type" value="Genomic_DNA"/>
</dbReference>
<dbReference type="RefSeq" id="WP_011635495.1">
    <property type="nucleotide sequence ID" value="NC_008345.1"/>
</dbReference>
<dbReference type="SMR" id="Q08A49"/>
<dbReference type="STRING" id="318167.Sfri_0003"/>
<dbReference type="KEGG" id="sfr:Sfri_0003"/>
<dbReference type="eggNOG" id="COG1195">
    <property type="taxonomic scope" value="Bacteria"/>
</dbReference>
<dbReference type="HOGENOM" id="CLU_040267_0_0_6"/>
<dbReference type="OrthoDB" id="9803889at2"/>
<dbReference type="Proteomes" id="UP000000684">
    <property type="component" value="Chromosome"/>
</dbReference>
<dbReference type="GO" id="GO:0005737">
    <property type="term" value="C:cytoplasm"/>
    <property type="evidence" value="ECO:0007669"/>
    <property type="project" value="UniProtKB-SubCell"/>
</dbReference>
<dbReference type="GO" id="GO:0005524">
    <property type="term" value="F:ATP binding"/>
    <property type="evidence" value="ECO:0007669"/>
    <property type="project" value="UniProtKB-UniRule"/>
</dbReference>
<dbReference type="GO" id="GO:0003697">
    <property type="term" value="F:single-stranded DNA binding"/>
    <property type="evidence" value="ECO:0007669"/>
    <property type="project" value="UniProtKB-UniRule"/>
</dbReference>
<dbReference type="GO" id="GO:0006260">
    <property type="term" value="P:DNA replication"/>
    <property type="evidence" value="ECO:0007669"/>
    <property type="project" value="UniProtKB-UniRule"/>
</dbReference>
<dbReference type="GO" id="GO:0000731">
    <property type="term" value="P:DNA synthesis involved in DNA repair"/>
    <property type="evidence" value="ECO:0007669"/>
    <property type="project" value="TreeGrafter"/>
</dbReference>
<dbReference type="GO" id="GO:0006302">
    <property type="term" value="P:double-strand break repair"/>
    <property type="evidence" value="ECO:0007669"/>
    <property type="project" value="TreeGrafter"/>
</dbReference>
<dbReference type="GO" id="GO:0009432">
    <property type="term" value="P:SOS response"/>
    <property type="evidence" value="ECO:0007669"/>
    <property type="project" value="UniProtKB-UniRule"/>
</dbReference>
<dbReference type="Gene3D" id="3.40.50.300">
    <property type="entry name" value="P-loop containing nucleotide triphosphate hydrolases"/>
    <property type="match status" value="1"/>
</dbReference>
<dbReference type="Gene3D" id="1.20.1050.90">
    <property type="entry name" value="RecF/RecN/SMC, N-terminal domain"/>
    <property type="match status" value="1"/>
</dbReference>
<dbReference type="HAMAP" id="MF_00365">
    <property type="entry name" value="RecF"/>
    <property type="match status" value="1"/>
</dbReference>
<dbReference type="InterPro" id="IPR001238">
    <property type="entry name" value="DNA-binding_RecF"/>
</dbReference>
<dbReference type="InterPro" id="IPR018078">
    <property type="entry name" value="DNA-binding_RecF_CS"/>
</dbReference>
<dbReference type="InterPro" id="IPR027417">
    <property type="entry name" value="P-loop_NTPase"/>
</dbReference>
<dbReference type="InterPro" id="IPR003395">
    <property type="entry name" value="RecF/RecN/SMC_N"/>
</dbReference>
<dbReference type="InterPro" id="IPR042174">
    <property type="entry name" value="RecF_2"/>
</dbReference>
<dbReference type="NCBIfam" id="TIGR00611">
    <property type="entry name" value="recf"/>
    <property type="match status" value="1"/>
</dbReference>
<dbReference type="PANTHER" id="PTHR32182">
    <property type="entry name" value="DNA REPLICATION AND REPAIR PROTEIN RECF"/>
    <property type="match status" value="1"/>
</dbReference>
<dbReference type="PANTHER" id="PTHR32182:SF0">
    <property type="entry name" value="DNA REPLICATION AND REPAIR PROTEIN RECF"/>
    <property type="match status" value="1"/>
</dbReference>
<dbReference type="Pfam" id="PF02463">
    <property type="entry name" value="SMC_N"/>
    <property type="match status" value="1"/>
</dbReference>
<dbReference type="SUPFAM" id="SSF52540">
    <property type="entry name" value="P-loop containing nucleoside triphosphate hydrolases"/>
    <property type="match status" value="1"/>
</dbReference>
<dbReference type="PROSITE" id="PS00617">
    <property type="entry name" value="RECF_1"/>
    <property type="match status" value="1"/>
</dbReference>
<dbReference type="PROSITE" id="PS00618">
    <property type="entry name" value="RECF_2"/>
    <property type="match status" value="1"/>
</dbReference>